<feature type="chain" id="PRO_0000376196" description="NADH-quinone oxidoreductase subunit B">
    <location>
        <begin position="1"/>
        <end position="173"/>
    </location>
</feature>
<feature type="binding site" evidence="1">
    <location>
        <position position="46"/>
    </location>
    <ligand>
        <name>[4Fe-4S] cluster</name>
        <dbReference type="ChEBI" id="CHEBI:49883"/>
    </ligand>
</feature>
<feature type="binding site" evidence="1">
    <location>
        <position position="47"/>
    </location>
    <ligand>
        <name>[4Fe-4S] cluster</name>
        <dbReference type="ChEBI" id="CHEBI:49883"/>
    </ligand>
</feature>
<feature type="binding site" evidence="1">
    <location>
        <position position="112"/>
    </location>
    <ligand>
        <name>[4Fe-4S] cluster</name>
        <dbReference type="ChEBI" id="CHEBI:49883"/>
    </ligand>
</feature>
<feature type="binding site" evidence="1">
    <location>
        <position position="142"/>
    </location>
    <ligand>
        <name>[4Fe-4S] cluster</name>
        <dbReference type="ChEBI" id="CHEBI:49883"/>
    </ligand>
</feature>
<gene>
    <name evidence="1" type="primary">nuoB</name>
    <name type="ordered locus">Dhaf_3750</name>
</gene>
<keyword id="KW-0004">4Fe-4S</keyword>
<keyword id="KW-1003">Cell membrane</keyword>
<keyword id="KW-0408">Iron</keyword>
<keyword id="KW-0411">Iron-sulfur</keyword>
<keyword id="KW-0472">Membrane</keyword>
<keyword id="KW-0479">Metal-binding</keyword>
<keyword id="KW-0520">NAD</keyword>
<keyword id="KW-0874">Quinone</keyword>
<keyword id="KW-1278">Translocase</keyword>
<keyword id="KW-0813">Transport</keyword>
<evidence type="ECO:0000255" key="1">
    <source>
        <dbReference type="HAMAP-Rule" id="MF_01356"/>
    </source>
</evidence>
<proteinExistence type="inferred from homology"/>
<sequence>MDVAKEKELREAEALMEKNVLLTSIDKVLNWGRGHSFWPVTFGLACCAIEMMAAGGPRVDISRFGYEVFRASPRHADVMIVAGTCTRKMAPLLRMIYDQMPEPKWVIAMGSCASAGGPFADSYSMLTGVDKIVPVDVYIPGCPPRPESLVYGLLQLQHKVNHPDKVRLLKHGK</sequence>
<dbReference type="EC" id="7.1.1.-" evidence="1"/>
<dbReference type="EMBL" id="CP001336">
    <property type="protein sequence ID" value="ACL21766.1"/>
    <property type="molecule type" value="Genomic_DNA"/>
</dbReference>
<dbReference type="RefSeq" id="WP_005813216.1">
    <property type="nucleotide sequence ID" value="NC_011830.1"/>
</dbReference>
<dbReference type="SMR" id="B8FRK6"/>
<dbReference type="KEGG" id="dhd:Dhaf_3750"/>
<dbReference type="HOGENOM" id="CLU_055737_7_3_9"/>
<dbReference type="Proteomes" id="UP000007726">
    <property type="component" value="Chromosome"/>
</dbReference>
<dbReference type="GO" id="GO:0005886">
    <property type="term" value="C:plasma membrane"/>
    <property type="evidence" value="ECO:0007669"/>
    <property type="project" value="UniProtKB-SubCell"/>
</dbReference>
<dbReference type="GO" id="GO:0045271">
    <property type="term" value="C:respiratory chain complex I"/>
    <property type="evidence" value="ECO:0007669"/>
    <property type="project" value="TreeGrafter"/>
</dbReference>
<dbReference type="GO" id="GO:0051539">
    <property type="term" value="F:4 iron, 4 sulfur cluster binding"/>
    <property type="evidence" value="ECO:0007669"/>
    <property type="project" value="UniProtKB-KW"/>
</dbReference>
<dbReference type="GO" id="GO:0005506">
    <property type="term" value="F:iron ion binding"/>
    <property type="evidence" value="ECO:0007669"/>
    <property type="project" value="UniProtKB-UniRule"/>
</dbReference>
<dbReference type="GO" id="GO:0008137">
    <property type="term" value="F:NADH dehydrogenase (ubiquinone) activity"/>
    <property type="evidence" value="ECO:0007669"/>
    <property type="project" value="InterPro"/>
</dbReference>
<dbReference type="GO" id="GO:0050136">
    <property type="term" value="F:NADH:ubiquinone reductase (non-electrogenic) activity"/>
    <property type="evidence" value="ECO:0007669"/>
    <property type="project" value="UniProtKB-UniRule"/>
</dbReference>
<dbReference type="GO" id="GO:0048038">
    <property type="term" value="F:quinone binding"/>
    <property type="evidence" value="ECO:0007669"/>
    <property type="project" value="UniProtKB-KW"/>
</dbReference>
<dbReference type="GO" id="GO:0009060">
    <property type="term" value="P:aerobic respiration"/>
    <property type="evidence" value="ECO:0007669"/>
    <property type="project" value="TreeGrafter"/>
</dbReference>
<dbReference type="GO" id="GO:0015990">
    <property type="term" value="P:electron transport coupled proton transport"/>
    <property type="evidence" value="ECO:0007669"/>
    <property type="project" value="TreeGrafter"/>
</dbReference>
<dbReference type="FunFam" id="3.40.50.12280:FF:000002">
    <property type="entry name" value="NADH-quinone oxidoreductase subunit B"/>
    <property type="match status" value="1"/>
</dbReference>
<dbReference type="Gene3D" id="3.40.50.12280">
    <property type="match status" value="1"/>
</dbReference>
<dbReference type="HAMAP" id="MF_01356">
    <property type="entry name" value="NDH1_NuoB"/>
    <property type="match status" value="1"/>
</dbReference>
<dbReference type="InterPro" id="IPR006137">
    <property type="entry name" value="NADH_UbQ_OxRdtase-like_20kDa"/>
</dbReference>
<dbReference type="InterPro" id="IPR006138">
    <property type="entry name" value="NADH_UQ_OxRdtase_20Kd_su"/>
</dbReference>
<dbReference type="NCBIfam" id="TIGR01957">
    <property type="entry name" value="nuoB_fam"/>
    <property type="match status" value="1"/>
</dbReference>
<dbReference type="NCBIfam" id="NF005012">
    <property type="entry name" value="PRK06411.1"/>
    <property type="match status" value="1"/>
</dbReference>
<dbReference type="PANTHER" id="PTHR11995">
    <property type="entry name" value="NADH DEHYDROGENASE"/>
    <property type="match status" value="1"/>
</dbReference>
<dbReference type="PANTHER" id="PTHR11995:SF14">
    <property type="entry name" value="NADH DEHYDROGENASE [UBIQUINONE] IRON-SULFUR PROTEIN 7, MITOCHONDRIAL"/>
    <property type="match status" value="1"/>
</dbReference>
<dbReference type="Pfam" id="PF01058">
    <property type="entry name" value="Oxidored_q6"/>
    <property type="match status" value="1"/>
</dbReference>
<dbReference type="SUPFAM" id="SSF56770">
    <property type="entry name" value="HydA/Nqo6-like"/>
    <property type="match status" value="1"/>
</dbReference>
<dbReference type="PROSITE" id="PS01150">
    <property type="entry name" value="COMPLEX1_20K"/>
    <property type="match status" value="1"/>
</dbReference>
<accession>B8FRK6</accession>
<name>NUOB_DESHD</name>
<protein>
    <recommendedName>
        <fullName evidence="1">NADH-quinone oxidoreductase subunit B</fullName>
        <ecNumber evidence="1">7.1.1.-</ecNumber>
    </recommendedName>
    <alternativeName>
        <fullName evidence="1">NADH dehydrogenase I subunit B</fullName>
    </alternativeName>
    <alternativeName>
        <fullName evidence="1">NDH-1 subunit B</fullName>
    </alternativeName>
</protein>
<comment type="function">
    <text evidence="1">NDH-1 shuttles electrons from NADH, via FMN and iron-sulfur (Fe-S) centers, to quinones in the respiratory chain. The immediate electron acceptor for the enzyme in this species is believed to be a menaquinone. Couples the redox reaction to proton translocation (for every two electrons transferred, four hydrogen ions are translocated across the cytoplasmic membrane), and thus conserves the redox energy in a proton gradient.</text>
</comment>
<comment type="catalytic activity">
    <reaction evidence="1">
        <text>a quinone + NADH + 5 H(+)(in) = a quinol + NAD(+) + 4 H(+)(out)</text>
        <dbReference type="Rhea" id="RHEA:57888"/>
        <dbReference type="ChEBI" id="CHEBI:15378"/>
        <dbReference type="ChEBI" id="CHEBI:24646"/>
        <dbReference type="ChEBI" id="CHEBI:57540"/>
        <dbReference type="ChEBI" id="CHEBI:57945"/>
        <dbReference type="ChEBI" id="CHEBI:132124"/>
    </reaction>
</comment>
<comment type="cofactor">
    <cofactor evidence="1">
        <name>[4Fe-4S] cluster</name>
        <dbReference type="ChEBI" id="CHEBI:49883"/>
    </cofactor>
    <text evidence="1">Binds 1 [4Fe-4S] cluster.</text>
</comment>
<comment type="subunit">
    <text evidence="1">NDH-1 is composed of 14 different subunits. Subunits NuoB, C, D, E, F, and G constitute the peripheral sector of the complex.</text>
</comment>
<comment type="subcellular location">
    <subcellularLocation>
        <location evidence="1">Cell membrane</location>
        <topology evidence="1">Peripheral membrane protein</topology>
        <orientation evidence="1">Cytoplasmic side</orientation>
    </subcellularLocation>
</comment>
<comment type="similarity">
    <text evidence="1">Belongs to the complex I 20 kDa subunit family.</text>
</comment>
<reference key="1">
    <citation type="journal article" date="2012" name="BMC Microbiol.">
        <title>Genome sequence of Desulfitobacterium hafniense DCB-2, a Gram-positive anaerobe capable of dehalogenation and metal reduction.</title>
        <authorList>
            <person name="Kim S.H."/>
            <person name="Harzman C."/>
            <person name="Davis J.K."/>
            <person name="Hutcheson R."/>
            <person name="Broderick J.B."/>
            <person name="Marsh T.L."/>
            <person name="Tiedje J.M."/>
        </authorList>
    </citation>
    <scope>NUCLEOTIDE SEQUENCE [LARGE SCALE GENOMIC DNA]</scope>
    <source>
        <strain>DSM 10664 / DCB-2</strain>
    </source>
</reference>
<organism>
    <name type="scientific">Desulfitobacterium hafniense (strain DSM 10664 / DCB-2)</name>
    <dbReference type="NCBI Taxonomy" id="272564"/>
    <lineage>
        <taxon>Bacteria</taxon>
        <taxon>Bacillati</taxon>
        <taxon>Bacillota</taxon>
        <taxon>Clostridia</taxon>
        <taxon>Eubacteriales</taxon>
        <taxon>Desulfitobacteriaceae</taxon>
        <taxon>Desulfitobacterium</taxon>
    </lineage>
</organism>